<gene>
    <name evidence="1" type="primary">matK</name>
</gene>
<name>MATK_ACOCI</name>
<comment type="function">
    <text evidence="1">Usually encoded in the trnK tRNA gene intron. Probably assists in splicing its own and other chloroplast group II introns.</text>
</comment>
<comment type="subcellular location">
    <subcellularLocation>
        <location>Plastid</location>
        <location>Chloroplast</location>
    </subcellularLocation>
</comment>
<comment type="similarity">
    <text evidence="1">Belongs to the intron maturase 2 family. MatK subfamily.</text>
</comment>
<sequence>MEEFKVYFEKDGSRQQYFLYPLLFQEYIYALAHNHVLNGLIFYESSENFVYDNKFSLIIVKRLITQMYQQNSLSNLVNDSNRNRLVRQNKNFYYQTILEGFSVIMEIPFSIIFLSSVEEKKAKIPKIQNLRSIHATFPFLEDKLSHLNHVSDILIPYPIHLEILVQVLQGWIQDVPSLHLLRFFLHEFHNWNSLITPKKSISFLFSKGNQRLFLFLYNSYVFECESALVFLRKQSFYLRSTSFGTFVERTHFYGKIEHIVVVRRKNFQKALSLFKDPFIHYIRYKGKSILASKGTHFLMKKWKYHLLNFWQCHFDFWSQPHRIHINQLSNHSFYFMGYLSSVRINFSTVRSQMLESSFLMDTPTKKFDTIVPIIPLIGSLAKAKFCNVSGHPVSKPVWADLSDADIIDRFGRICRNLSHYHSGSSKKQSLYRVKYILRLSCARTLARKHKSTVRAFFKRLGSEFLEEFFTDKEQVLSLIFPSLRSPSHRVHKGERIWYLDIIRINDLVNNS</sequence>
<protein>
    <recommendedName>
        <fullName evidence="1">Maturase K</fullName>
    </recommendedName>
    <alternativeName>
        <fullName evidence="1">Intron maturase</fullName>
    </alternativeName>
</protein>
<geneLocation type="chloroplast"/>
<accession>A9LYG6</accession>
<reference key="1">
    <citation type="submission" date="2007-11" db="EMBL/GenBank/DDBJ databases">
        <title>The complete chloroplast genome of Acorus americanus.</title>
        <authorList>
            <person name="Peery R.M."/>
            <person name="Chumley T.W."/>
            <person name="Kuehl J.V."/>
            <person name="Boore J.L."/>
            <person name="Raubeson L.A."/>
        </authorList>
    </citation>
    <scope>NUCLEOTIDE SEQUENCE [LARGE SCALE GENOMIC DNA]</scope>
</reference>
<evidence type="ECO:0000255" key="1">
    <source>
        <dbReference type="HAMAP-Rule" id="MF_01390"/>
    </source>
</evidence>
<proteinExistence type="inferred from homology"/>
<dbReference type="EMBL" id="EU273602">
    <property type="protein sequence ID" value="ABX38725.1"/>
    <property type="molecule type" value="Genomic_DNA"/>
</dbReference>
<dbReference type="RefSeq" id="YP_001586163.1">
    <property type="nucleotide sequence ID" value="NC_010093.1"/>
</dbReference>
<dbReference type="GeneID" id="5777704"/>
<dbReference type="GO" id="GO:0009507">
    <property type="term" value="C:chloroplast"/>
    <property type="evidence" value="ECO:0007669"/>
    <property type="project" value="UniProtKB-SubCell"/>
</dbReference>
<dbReference type="GO" id="GO:0003723">
    <property type="term" value="F:RNA binding"/>
    <property type="evidence" value="ECO:0007669"/>
    <property type="project" value="UniProtKB-KW"/>
</dbReference>
<dbReference type="GO" id="GO:0006397">
    <property type="term" value="P:mRNA processing"/>
    <property type="evidence" value="ECO:0007669"/>
    <property type="project" value="UniProtKB-KW"/>
</dbReference>
<dbReference type="GO" id="GO:0008380">
    <property type="term" value="P:RNA splicing"/>
    <property type="evidence" value="ECO:0007669"/>
    <property type="project" value="UniProtKB-UniRule"/>
</dbReference>
<dbReference type="GO" id="GO:0008033">
    <property type="term" value="P:tRNA processing"/>
    <property type="evidence" value="ECO:0007669"/>
    <property type="project" value="UniProtKB-KW"/>
</dbReference>
<dbReference type="HAMAP" id="MF_01390">
    <property type="entry name" value="MatK"/>
    <property type="match status" value="1"/>
</dbReference>
<dbReference type="InterPro" id="IPR024937">
    <property type="entry name" value="Domain_X"/>
</dbReference>
<dbReference type="InterPro" id="IPR002866">
    <property type="entry name" value="Maturase_MatK"/>
</dbReference>
<dbReference type="InterPro" id="IPR024942">
    <property type="entry name" value="Maturase_MatK_N"/>
</dbReference>
<dbReference type="PANTHER" id="PTHR34811">
    <property type="entry name" value="MATURASE K"/>
    <property type="match status" value="1"/>
</dbReference>
<dbReference type="PANTHER" id="PTHR34811:SF1">
    <property type="entry name" value="MATURASE K"/>
    <property type="match status" value="1"/>
</dbReference>
<dbReference type="Pfam" id="PF01348">
    <property type="entry name" value="Intron_maturas2"/>
    <property type="match status" value="1"/>
</dbReference>
<dbReference type="Pfam" id="PF01824">
    <property type="entry name" value="MatK_N"/>
    <property type="match status" value="1"/>
</dbReference>
<keyword id="KW-0150">Chloroplast</keyword>
<keyword id="KW-0507">mRNA processing</keyword>
<keyword id="KW-0934">Plastid</keyword>
<keyword id="KW-0694">RNA-binding</keyword>
<keyword id="KW-0819">tRNA processing</keyword>
<feature type="chain" id="PRO_0000355909" description="Maturase K">
    <location>
        <begin position="1"/>
        <end position="511"/>
    </location>
</feature>
<organism>
    <name type="scientific">Acorus calamus var. americanus</name>
    <name type="common">American sweet flag</name>
    <name type="synonym">Acorus americanus</name>
    <dbReference type="NCBI Taxonomy" id="263995"/>
    <lineage>
        <taxon>Eukaryota</taxon>
        <taxon>Viridiplantae</taxon>
        <taxon>Streptophyta</taxon>
        <taxon>Embryophyta</taxon>
        <taxon>Tracheophyta</taxon>
        <taxon>Spermatophyta</taxon>
        <taxon>Magnoliopsida</taxon>
        <taxon>Liliopsida</taxon>
        <taxon>Acoraceae</taxon>
        <taxon>Acorus</taxon>
    </lineage>
</organism>